<gene>
    <name type="primary">rfbX</name>
    <name type="synonym">wzx</name>
    <name type="ordered locus">b2037</name>
    <name type="ordered locus">JW2022</name>
</gene>
<reference key="1">
    <citation type="journal article" date="1994" name="J. Bacteriol.">
        <title>Genetic analysis of the O-specific lipopolysaccharide biosynthesis region (rfb) of Escherichia coli K-12 W3110: identification of genes that confer group 6 specificity to Shigella flexneri serotypes Y and 4a.</title>
        <authorList>
            <person name="Yao Z."/>
            <person name="Valvano M.A."/>
        </authorList>
    </citation>
    <scope>NUCLEOTIDE SEQUENCE [GENOMIC DNA]</scope>
    <source>
        <strain>K12 / W3110 / ATCC 27325 / DSM 5911</strain>
    </source>
</reference>
<reference key="2">
    <citation type="journal article" date="1994" name="J. Bacteriol.">
        <title>Structure of the O antigen of Escherichia coli K-12 and the sequence of its rfb gene cluster.</title>
        <authorList>
            <person name="Stevenson G."/>
            <person name="Neal B."/>
            <person name="Liu D."/>
            <person name="Hobbs M."/>
            <person name="Packer N.H."/>
            <person name="Batley M."/>
            <person name="Redmond J.W."/>
            <person name="Lindquist L."/>
            <person name="Reeves P.R."/>
        </authorList>
    </citation>
    <scope>NUCLEOTIDE SEQUENCE [GENOMIC DNA]</scope>
    <source>
        <strain>K12 / WG1</strain>
    </source>
</reference>
<reference key="3">
    <citation type="submission" date="1997-12" db="EMBL/GenBank/DDBJ databases">
        <authorList>
            <person name="Stevenson G."/>
        </authorList>
    </citation>
    <scope>SEQUENCE REVISION TO 236</scope>
</reference>
<reference key="4">
    <citation type="journal article" date="1996" name="DNA Res.">
        <title>A 460-kb DNA sequence of the Escherichia coli K-12 genome corresponding to the 40.1-50.0 min region on the linkage map.</title>
        <authorList>
            <person name="Itoh T."/>
            <person name="Aiba H."/>
            <person name="Baba T."/>
            <person name="Fujita K."/>
            <person name="Hayashi K."/>
            <person name="Inada T."/>
            <person name="Isono K."/>
            <person name="Kasai H."/>
            <person name="Kimura S."/>
            <person name="Kitakawa M."/>
            <person name="Kitagawa M."/>
            <person name="Makino K."/>
            <person name="Miki T."/>
            <person name="Mizobuchi K."/>
            <person name="Mori H."/>
            <person name="Mori T."/>
            <person name="Motomura K."/>
            <person name="Nakade S."/>
            <person name="Nakamura Y."/>
            <person name="Nashimoto H."/>
            <person name="Nishio Y."/>
            <person name="Oshima T."/>
            <person name="Saito N."/>
            <person name="Sampei G."/>
            <person name="Seki Y."/>
            <person name="Sivasundaram S."/>
            <person name="Tagami H."/>
            <person name="Takeda J."/>
            <person name="Takemoto K."/>
            <person name="Wada C."/>
            <person name="Yamamoto Y."/>
            <person name="Horiuchi T."/>
        </authorList>
    </citation>
    <scope>NUCLEOTIDE SEQUENCE [LARGE SCALE GENOMIC DNA]</scope>
    <source>
        <strain>K12 / W3110 / ATCC 27325 / DSM 5911</strain>
    </source>
</reference>
<reference key="5">
    <citation type="journal article" date="1997" name="Science">
        <title>The complete genome sequence of Escherichia coli K-12.</title>
        <authorList>
            <person name="Blattner F.R."/>
            <person name="Plunkett G. III"/>
            <person name="Bloch C.A."/>
            <person name="Perna N.T."/>
            <person name="Burland V."/>
            <person name="Riley M."/>
            <person name="Collado-Vides J."/>
            <person name="Glasner J.D."/>
            <person name="Rode C.K."/>
            <person name="Mayhew G.F."/>
            <person name="Gregor J."/>
            <person name="Davis N.W."/>
            <person name="Kirkpatrick H.A."/>
            <person name="Goeden M.A."/>
            <person name="Rose D.J."/>
            <person name="Mau B."/>
            <person name="Shao Y."/>
        </authorList>
    </citation>
    <scope>NUCLEOTIDE SEQUENCE [LARGE SCALE GENOMIC DNA]</scope>
    <source>
        <strain>K12 / MG1655 / ATCC 47076</strain>
    </source>
</reference>
<reference key="6">
    <citation type="journal article" date="2006" name="Mol. Syst. Biol.">
        <title>Highly accurate genome sequences of Escherichia coli K-12 strains MG1655 and W3110.</title>
        <authorList>
            <person name="Hayashi K."/>
            <person name="Morooka N."/>
            <person name="Yamamoto Y."/>
            <person name="Fujita K."/>
            <person name="Isono K."/>
            <person name="Choi S."/>
            <person name="Ohtsubo E."/>
            <person name="Baba T."/>
            <person name="Wanner B.L."/>
            <person name="Mori H."/>
            <person name="Horiuchi T."/>
        </authorList>
    </citation>
    <scope>NUCLEOTIDE SEQUENCE [LARGE SCALE GENOMIC DNA]</scope>
    <source>
        <strain>K12 / W3110 / ATCC 27325 / DSM 5911</strain>
    </source>
</reference>
<reference key="7">
    <citation type="journal article" date="2005" name="Science">
        <title>Global topology analysis of the Escherichia coli inner membrane proteome.</title>
        <authorList>
            <person name="Daley D.O."/>
            <person name="Rapp M."/>
            <person name="Granseth E."/>
            <person name="Melen K."/>
            <person name="Drew D."/>
            <person name="von Heijne G."/>
        </authorList>
    </citation>
    <scope>TOPOLOGY [LARGE SCALE ANALYSIS]</scope>
    <source>
        <strain>K12 / MG1655 / ATCC 47076</strain>
    </source>
</reference>
<organism>
    <name type="scientific">Escherichia coli (strain K12)</name>
    <dbReference type="NCBI Taxonomy" id="83333"/>
    <lineage>
        <taxon>Bacteria</taxon>
        <taxon>Pseudomonadati</taxon>
        <taxon>Pseudomonadota</taxon>
        <taxon>Gammaproteobacteria</taxon>
        <taxon>Enterobacterales</taxon>
        <taxon>Enterobacteriaceae</taxon>
        <taxon>Escherichia</taxon>
    </lineage>
</organism>
<evidence type="ECO:0000255" key="1"/>
<evidence type="ECO:0000305" key="2"/>
<feature type="chain" id="PRO_0000166449" description="Putative O-antigen transporter">
    <location>
        <begin position="1"/>
        <end position="415"/>
    </location>
</feature>
<feature type="topological domain" description="Cytoplasmic" evidence="1">
    <location>
        <begin position="1"/>
        <end position="11"/>
    </location>
</feature>
<feature type="transmembrane region" description="Helical" evidence="1">
    <location>
        <begin position="12"/>
        <end position="32"/>
    </location>
</feature>
<feature type="topological domain" description="Periplasmic" evidence="1">
    <location>
        <begin position="33"/>
        <end position="41"/>
    </location>
</feature>
<feature type="transmembrane region" description="Helical" evidence="1">
    <location>
        <begin position="42"/>
        <end position="62"/>
    </location>
</feature>
<feature type="topological domain" description="Cytoplasmic" evidence="1">
    <location>
        <begin position="63"/>
        <end position="83"/>
    </location>
</feature>
<feature type="transmembrane region" description="Helical" evidence="1">
    <location>
        <begin position="84"/>
        <end position="104"/>
    </location>
</feature>
<feature type="topological domain" description="Periplasmic" evidence="1">
    <location>
        <begin position="105"/>
        <end position="117"/>
    </location>
</feature>
<feature type="transmembrane region" description="Helical" evidence="1">
    <location>
        <begin position="118"/>
        <end position="138"/>
    </location>
</feature>
<feature type="topological domain" description="Cytoplasmic" evidence="1">
    <location>
        <begin position="139"/>
        <end position="173"/>
    </location>
</feature>
<feature type="transmembrane region" description="Helical" evidence="1">
    <location>
        <begin position="174"/>
        <end position="194"/>
    </location>
</feature>
<feature type="topological domain" description="Periplasmic" evidence="1">
    <location>
        <begin position="195"/>
        <end position="220"/>
    </location>
</feature>
<feature type="transmembrane region" description="Helical" evidence="1">
    <location>
        <begin position="221"/>
        <end position="241"/>
    </location>
</feature>
<feature type="topological domain" description="Cytoplasmic" evidence="1">
    <location>
        <begin position="242"/>
        <end position="295"/>
    </location>
</feature>
<feature type="transmembrane region" description="Helical" evidence="1">
    <location>
        <begin position="296"/>
        <end position="316"/>
    </location>
</feature>
<feature type="topological domain" description="Periplasmic" evidence="1">
    <location>
        <begin position="317"/>
        <end position="328"/>
    </location>
</feature>
<feature type="transmembrane region" description="Helical" evidence="1">
    <location>
        <begin position="329"/>
        <end position="349"/>
    </location>
</feature>
<feature type="topological domain" description="Cytoplasmic" evidence="1">
    <location>
        <begin position="350"/>
        <end position="362"/>
    </location>
</feature>
<feature type="transmembrane region" description="Helical" evidence="1">
    <location>
        <begin position="363"/>
        <end position="383"/>
    </location>
</feature>
<feature type="topological domain" description="Periplasmic" evidence="1">
    <location>
        <begin position="384"/>
        <end position="385"/>
    </location>
</feature>
<feature type="transmembrane region" description="Helical" evidence="1">
    <location>
        <begin position="386"/>
        <end position="406"/>
    </location>
</feature>
<feature type="topological domain" description="Cytoplasmic" evidence="1">
    <location>
        <begin position="407"/>
        <end position="415"/>
    </location>
</feature>
<feature type="sequence conflict" description="In Ref. 1; AAC31631." evidence="2" ref="1">
    <original>I</original>
    <variation>V</variation>
    <location>
        <position position="236"/>
    </location>
</feature>
<feature type="sequence conflict" description="In Ref. 1; AAC31631." evidence="2" ref="1">
    <original>Q</original>
    <variation>R</variation>
    <location>
        <position position="350"/>
    </location>
</feature>
<sequence>MNTNKLSLRRNVIYLAVVQGSNYLLPLLTFPYLVRTLGPENFGIFGFCQATMLYMIMFVEYGFNLTATQSIAKAADSKDKVTSIFWAVIFSKIVLIVITLIFLTSMTLLVPEYNKHAVIIWSFVPALVGNLIYPIWLFQGKEKMKWLTLSSILSRLAIIPLTFIFVNTKSDIAIAGFIQSSANLVAGIIALAIVVHEGWIGKVTLSLHNVRRSLADGFHVFISTSAISLYSTGIVIILGFISGPTSVGNFNAANTIRNALQGLLNPITQAIYPRISSTLVLNRVKGVILIKKSLTCLSLIGGAFSLILLLGASILVKISIGPGYDNAVIVLMIISPLPFLISLSNVYGIQVMLTHNYKKEFSKILIAAGLLSLLLIFPLTTLFKEIGAAITLLATECLVTSLMLMFVRNNKLLVC</sequence>
<protein>
    <recommendedName>
        <fullName>Putative O-antigen transporter</fullName>
    </recommendedName>
</protein>
<keyword id="KW-0997">Cell inner membrane</keyword>
<keyword id="KW-1003">Cell membrane</keyword>
<keyword id="KW-0448">Lipopolysaccharide biosynthesis</keyword>
<keyword id="KW-0472">Membrane</keyword>
<keyword id="KW-1185">Reference proteome</keyword>
<keyword id="KW-0812">Transmembrane</keyword>
<keyword id="KW-1133">Transmembrane helix</keyword>
<keyword id="KW-0813">Transport</keyword>
<comment type="function">
    <text>May be involved in the translocation process of the nascent O-polysaccharide molecules and/or its ligation to lipid A core units.</text>
</comment>
<comment type="pathway">
    <text>Bacterial outer membrane biogenesis; LPS O-antigen biosynthesis.</text>
</comment>
<comment type="subcellular location">
    <subcellularLocation>
        <location>Cell inner membrane</location>
        <topology>Multi-pass membrane protein</topology>
    </subcellularLocation>
</comment>
<comment type="similarity">
    <text evidence="2">Belongs to the polysaccharide synthase family.</text>
</comment>
<name>RFBX_ECOLI</name>
<proteinExistence type="evidence at protein level"/>
<dbReference type="EMBL" id="U03041">
    <property type="protein sequence ID" value="AAC31631.1"/>
    <property type="molecule type" value="Genomic_DNA"/>
</dbReference>
<dbReference type="EMBL" id="U09876">
    <property type="protein sequence ID" value="AAB88402.1"/>
    <property type="molecule type" value="Genomic_DNA"/>
</dbReference>
<dbReference type="EMBL" id="U00096">
    <property type="protein sequence ID" value="AAC75098.1"/>
    <property type="molecule type" value="Genomic_DNA"/>
</dbReference>
<dbReference type="EMBL" id="AP009048">
    <property type="protein sequence ID" value="BAA15879.1"/>
    <property type="molecule type" value="Genomic_DNA"/>
</dbReference>
<dbReference type="PIR" id="D64969">
    <property type="entry name" value="D64969"/>
</dbReference>
<dbReference type="RefSeq" id="NP_416541.1">
    <property type="nucleotide sequence ID" value="NC_000913.3"/>
</dbReference>
<dbReference type="RefSeq" id="WP_001393538.1">
    <property type="nucleotide sequence ID" value="NZ_LN832404.1"/>
</dbReference>
<dbReference type="SMR" id="P37746"/>
<dbReference type="BioGRID" id="4259620">
    <property type="interactions" value="173"/>
</dbReference>
<dbReference type="FunCoup" id="P37746">
    <property type="interactions" value="59"/>
</dbReference>
<dbReference type="STRING" id="511145.b2037"/>
<dbReference type="TCDB" id="2.A.66.2.1">
    <property type="family name" value="the multidrug/oligosaccharidyl-lipid/polysaccharide (mop) flippase superfamily"/>
</dbReference>
<dbReference type="PaxDb" id="511145-b2037"/>
<dbReference type="EnsemblBacteria" id="AAC75098">
    <property type="protein sequence ID" value="AAC75098"/>
    <property type="gene ID" value="b2037"/>
</dbReference>
<dbReference type="GeneID" id="946557"/>
<dbReference type="KEGG" id="ecj:JW2022"/>
<dbReference type="KEGG" id="eco:b2037"/>
<dbReference type="KEGG" id="ecoc:C3026_11475"/>
<dbReference type="PATRIC" id="fig|1411691.4.peg.214"/>
<dbReference type="EchoBASE" id="EB1923"/>
<dbReference type="eggNOG" id="COG2244">
    <property type="taxonomic scope" value="Bacteria"/>
</dbReference>
<dbReference type="HOGENOM" id="CLU_022017_0_2_6"/>
<dbReference type="InParanoid" id="P37746"/>
<dbReference type="OMA" id="RTQYLIP"/>
<dbReference type="OrthoDB" id="103403at2"/>
<dbReference type="PhylomeDB" id="P37746"/>
<dbReference type="BioCyc" id="EcoCyc:RFBX-MONOMER"/>
<dbReference type="BioCyc" id="MetaCyc:RFBX-MONOMER"/>
<dbReference type="UniPathway" id="UPA00281"/>
<dbReference type="PRO" id="PR:P37746"/>
<dbReference type="Proteomes" id="UP000000625">
    <property type="component" value="Chromosome"/>
</dbReference>
<dbReference type="GO" id="GO:0005886">
    <property type="term" value="C:plasma membrane"/>
    <property type="evidence" value="ECO:0000314"/>
    <property type="project" value="EcoCyc"/>
</dbReference>
<dbReference type="GO" id="GO:0006974">
    <property type="term" value="P:DNA damage response"/>
    <property type="evidence" value="ECO:0000315"/>
    <property type="project" value="EcoCyc"/>
</dbReference>
<dbReference type="GO" id="GO:0009243">
    <property type="term" value="P:O antigen biosynthetic process"/>
    <property type="evidence" value="ECO:0007669"/>
    <property type="project" value="UniProtKB-UniPathway"/>
</dbReference>
<dbReference type="GO" id="GO:0046677">
    <property type="term" value="P:response to antibiotic"/>
    <property type="evidence" value="ECO:0000315"/>
    <property type="project" value="EcoCyc"/>
</dbReference>
<dbReference type="CDD" id="cd13128">
    <property type="entry name" value="MATE_Wzx_like"/>
    <property type="match status" value="1"/>
</dbReference>
<dbReference type="InterPro" id="IPR050833">
    <property type="entry name" value="Poly_Biosynth_Transport"/>
</dbReference>
<dbReference type="InterPro" id="IPR002797">
    <property type="entry name" value="Polysacc_synth"/>
</dbReference>
<dbReference type="PANTHER" id="PTHR30250:SF11">
    <property type="entry name" value="O-ANTIGEN TRANSPORTER-RELATED"/>
    <property type="match status" value="1"/>
</dbReference>
<dbReference type="PANTHER" id="PTHR30250">
    <property type="entry name" value="PST FAMILY PREDICTED COLANIC ACID TRANSPORTER"/>
    <property type="match status" value="1"/>
</dbReference>
<dbReference type="Pfam" id="PF01943">
    <property type="entry name" value="Polysacc_synt"/>
    <property type="match status" value="1"/>
</dbReference>
<accession>P37746</accession>
<accession>P76376</accession>